<evidence type="ECO:0000255" key="1"/>
<evidence type="ECO:0000305" key="2"/>
<protein>
    <recommendedName>
        <fullName>Uncharacterized transporter AF_1533</fullName>
    </recommendedName>
</protein>
<gene>
    <name type="ordered locus">AF_1533</name>
</gene>
<feature type="chain" id="PRO_0000108204" description="Uncharacterized transporter AF_1533">
    <location>
        <begin position="1"/>
        <end position="278"/>
    </location>
</feature>
<feature type="transmembrane region" description="Helical" evidence="1">
    <location>
        <begin position="1"/>
        <end position="21"/>
    </location>
</feature>
<feature type="transmembrane region" description="Helical" evidence="1">
    <location>
        <begin position="30"/>
        <end position="50"/>
    </location>
</feature>
<feature type="transmembrane region" description="Helical" evidence="1">
    <location>
        <begin position="56"/>
        <end position="76"/>
    </location>
</feature>
<feature type="transmembrane region" description="Helical" evidence="1">
    <location>
        <begin position="92"/>
        <end position="112"/>
    </location>
</feature>
<feature type="transmembrane region" description="Helical" evidence="1">
    <location>
        <begin position="116"/>
        <end position="136"/>
    </location>
</feature>
<feature type="transmembrane region" description="Helical" evidence="1">
    <location>
        <begin position="146"/>
        <end position="166"/>
    </location>
</feature>
<feature type="transmembrane region" description="Helical" evidence="1">
    <location>
        <begin position="170"/>
        <end position="190"/>
    </location>
</feature>
<feature type="transmembrane region" description="Helical" evidence="1">
    <location>
        <begin position="209"/>
        <end position="229"/>
    </location>
</feature>
<feature type="transmembrane region" description="Helical" evidence="1">
    <location>
        <begin position="230"/>
        <end position="250"/>
    </location>
</feature>
<feature type="transmembrane region" description="Helical" evidence="1">
    <location>
        <begin position="258"/>
        <end position="278"/>
    </location>
</feature>
<feature type="domain" description="EamA 1">
    <location>
        <begin position="12"/>
        <end position="136"/>
    </location>
</feature>
<feature type="domain" description="EamA 2">
    <location>
        <begin position="154"/>
        <end position="274"/>
    </location>
</feature>
<proteinExistence type="inferred from homology"/>
<dbReference type="EMBL" id="AE000782">
    <property type="protein sequence ID" value="AAB89716.1"/>
    <property type="molecule type" value="Genomic_DNA"/>
</dbReference>
<dbReference type="PIR" id="D69441">
    <property type="entry name" value="D69441"/>
</dbReference>
<dbReference type="RefSeq" id="WP_010879030.1">
    <property type="nucleotide sequence ID" value="NC_000917.1"/>
</dbReference>
<dbReference type="SMR" id="O28739"/>
<dbReference type="STRING" id="224325.AF_1533"/>
<dbReference type="TCDB" id="2.A.7.3.5">
    <property type="family name" value="the drug/metabolite transporter (dmt) superfamily"/>
</dbReference>
<dbReference type="PaxDb" id="224325-AF_1533"/>
<dbReference type="EnsemblBacteria" id="AAB89716">
    <property type="protein sequence ID" value="AAB89716"/>
    <property type="gene ID" value="AF_1533"/>
</dbReference>
<dbReference type="GeneID" id="1484761"/>
<dbReference type="KEGG" id="afu:AF_1533"/>
<dbReference type="eggNOG" id="arCOG00272">
    <property type="taxonomic scope" value="Archaea"/>
</dbReference>
<dbReference type="HOGENOM" id="CLU_082650_1_0_2"/>
<dbReference type="OrthoDB" id="51679at2157"/>
<dbReference type="PhylomeDB" id="O28739"/>
<dbReference type="Proteomes" id="UP000002199">
    <property type="component" value="Chromosome"/>
</dbReference>
<dbReference type="GO" id="GO:0005886">
    <property type="term" value="C:plasma membrane"/>
    <property type="evidence" value="ECO:0007669"/>
    <property type="project" value="UniProtKB-SubCell"/>
</dbReference>
<dbReference type="InterPro" id="IPR000620">
    <property type="entry name" value="EamA_dom"/>
</dbReference>
<dbReference type="PANTHER" id="PTHR22911">
    <property type="entry name" value="ACYL-MALONYL CONDENSING ENZYME-RELATED"/>
    <property type="match status" value="1"/>
</dbReference>
<dbReference type="PANTHER" id="PTHR22911:SF137">
    <property type="entry name" value="SOLUTE CARRIER FAMILY 35 MEMBER G2-RELATED"/>
    <property type="match status" value="1"/>
</dbReference>
<dbReference type="Pfam" id="PF00892">
    <property type="entry name" value="EamA"/>
    <property type="match status" value="2"/>
</dbReference>
<dbReference type="SUPFAM" id="SSF103481">
    <property type="entry name" value="Multidrug resistance efflux transporter EmrE"/>
    <property type="match status" value="2"/>
</dbReference>
<reference key="1">
    <citation type="journal article" date="1997" name="Nature">
        <title>The complete genome sequence of the hyperthermophilic, sulphate-reducing archaeon Archaeoglobus fulgidus.</title>
        <authorList>
            <person name="Klenk H.-P."/>
            <person name="Clayton R.A."/>
            <person name="Tomb J.-F."/>
            <person name="White O."/>
            <person name="Nelson K.E."/>
            <person name="Ketchum K.A."/>
            <person name="Dodson R.J."/>
            <person name="Gwinn M.L."/>
            <person name="Hickey E.K."/>
            <person name="Peterson J.D."/>
            <person name="Richardson D.L."/>
            <person name="Kerlavage A.R."/>
            <person name="Graham D.E."/>
            <person name="Kyrpides N.C."/>
            <person name="Fleischmann R.D."/>
            <person name="Quackenbush J."/>
            <person name="Lee N.H."/>
            <person name="Sutton G.G."/>
            <person name="Gill S.R."/>
            <person name="Kirkness E.F."/>
            <person name="Dougherty B.A."/>
            <person name="McKenney K."/>
            <person name="Adams M.D."/>
            <person name="Loftus B.J."/>
            <person name="Peterson S.N."/>
            <person name="Reich C.I."/>
            <person name="McNeil L.K."/>
            <person name="Badger J.H."/>
            <person name="Glodek A."/>
            <person name="Zhou L."/>
            <person name="Overbeek R."/>
            <person name="Gocayne J.D."/>
            <person name="Weidman J.F."/>
            <person name="McDonald L.A."/>
            <person name="Utterback T.R."/>
            <person name="Cotton M.D."/>
            <person name="Spriggs T."/>
            <person name="Artiach P."/>
            <person name="Kaine B.P."/>
            <person name="Sykes S.M."/>
            <person name="Sadow P.W."/>
            <person name="D'Andrea K.P."/>
            <person name="Bowman C."/>
            <person name="Fujii C."/>
            <person name="Garland S.A."/>
            <person name="Mason T.M."/>
            <person name="Olsen G.J."/>
            <person name="Fraser C.M."/>
            <person name="Smith H.O."/>
            <person name="Woese C.R."/>
            <person name="Venter J.C."/>
        </authorList>
    </citation>
    <scope>NUCLEOTIDE SEQUENCE [LARGE SCALE GENOMIC DNA]</scope>
    <source>
        <strain>ATCC 49558 / DSM 4304 / JCM 9628 / NBRC 100126 / VC-16</strain>
    </source>
</reference>
<comment type="subcellular location">
    <subcellularLocation>
        <location evidence="2">Cell membrane</location>
        <topology evidence="2">Multi-pass membrane protein</topology>
    </subcellularLocation>
</comment>
<comment type="similarity">
    <text evidence="2">Belongs to the EamA transporter family.</text>
</comment>
<accession>O28739</accession>
<name>Y1533_ARCFU</name>
<sequence length="278" mass="30446">MLEILMSLTAAICWAFNGIAYRKGVKDVSAFTANFHRTLFATVYFLPLALRDFPGVVIDLQTALVLVISAMLSFYIGDLSYFASLKRSPVSIALPASSTYPVYVVLLSTVIYGAELSLNALISAILVFVAVYIIYGSGEKGETSGLFYALLAAFSWALAILTLDFLTDRLPVSIVAFVRLLLCLILLSFTAKKDELSTEIRLFFRSVRGIFLLLGIMLFITAIKVSSSWNVVQPSSTSPVFAAIFGAIFLKERISFRLVAGIFVIILAILLLLLPPLQ</sequence>
<keyword id="KW-1003">Cell membrane</keyword>
<keyword id="KW-0472">Membrane</keyword>
<keyword id="KW-1185">Reference proteome</keyword>
<keyword id="KW-0677">Repeat</keyword>
<keyword id="KW-0812">Transmembrane</keyword>
<keyword id="KW-1133">Transmembrane helix</keyword>
<keyword id="KW-0813">Transport</keyword>
<organism>
    <name type="scientific">Archaeoglobus fulgidus (strain ATCC 49558 / DSM 4304 / JCM 9628 / NBRC 100126 / VC-16)</name>
    <dbReference type="NCBI Taxonomy" id="224325"/>
    <lineage>
        <taxon>Archaea</taxon>
        <taxon>Methanobacteriati</taxon>
        <taxon>Methanobacteriota</taxon>
        <taxon>Archaeoglobi</taxon>
        <taxon>Archaeoglobales</taxon>
        <taxon>Archaeoglobaceae</taxon>
        <taxon>Archaeoglobus</taxon>
    </lineage>
</organism>